<name>HTD2_SCHPO</name>
<dbReference type="EC" id="4.2.1.-"/>
<dbReference type="EMBL" id="CU329671">
    <property type="protein sequence ID" value="CAB50978.1"/>
    <property type="molecule type" value="Genomic_DNA"/>
</dbReference>
<dbReference type="PIR" id="T39292">
    <property type="entry name" value="T39292"/>
</dbReference>
<dbReference type="RefSeq" id="NP_596471.1">
    <property type="nucleotide sequence ID" value="NM_001022390.2"/>
</dbReference>
<dbReference type="SMR" id="Q9Y814"/>
<dbReference type="BioGRID" id="276296">
    <property type="interactions" value="1"/>
</dbReference>
<dbReference type="FunCoup" id="Q9Y814">
    <property type="interactions" value="208"/>
</dbReference>
<dbReference type="STRING" id="284812.Q9Y814"/>
<dbReference type="PaxDb" id="4896-SPBC1105.15c.1"/>
<dbReference type="EnsemblFungi" id="SPBC1105.15c.1">
    <property type="protein sequence ID" value="SPBC1105.15c.1:pep"/>
    <property type="gene ID" value="SPBC1105.15c"/>
</dbReference>
<dbReference type="PomBase" id="SPBC1105.15c">
    <property type="gene designation" value="htd2"/>
</dbReference>
<dbReference type="VEuPathDB" id="FungiDB:SPBC1105.15c"/>
<dbReference type="eggNOG" id="ENOG502S5QU">
    <property type="taxonomic scope" value="Eukaryota"/>
</dbReference>
<dbReference type="HOGENOM" id="CLU_028690_3_0_1"/>
<dbReference type="InParanoid" id="Q9Y814"/>
<dbReference type="OMA" id="WDIEERR"/>
<dbReference type="PhylomeDB" id="Q9Y814"/>
<dbReference type="PRO" id="PR:Q9Y814"/>
<dbReference type="Proteomes" id="UP000002485">
    <property type="component" value="Chromosome II"/>
</dbReference>
<dbReference type="GO" id="GO:0005739">
    <property type="term" value="C:mitochondrion"/>
    <property type="evidence" value="ECO:0000318"/>
    <property type="project" value="GO_Central"/>
</dbReference>
<dbReference type="GO" id="GO:0019171">
    <property type="term" value="F:(3R)-hydroxyacyl-[acyl-carrier-protein] dehydratase activity"/>
    <property type="evidence" value="ECO:0000318"/>
    <property type="project" value="GO_Central"/>
</dbReference>
<dbReference type="GO" id="GO:0016491">
    <property type="term" value="F:oxidoreductase activity"/>
    <property type="evidence" value="ECO:0007669"/>
    <property type="project" value="UniProtKB-KW"/>
</dbReference>
<dbReference type="GO" id="GO:0006633">
    <property type="term" value="P:fatty acid biosynthetic process"/>
    <property type="evidence" value="ECO:0000250"/>
    <property type="project" value="PomBase"/>
</dbReference>
<dbReference type="Gene3D" id="3.10.129.10">
    <property type="entry name" value="Hotdog Thioesterase"/>
    <property type="match status" value="1"/>
</dbReference>
<dbReference type="InterPro" id="IPR029069">
    <property type="entry name" value="HotDog_dom_sf"/>
</dbReference>
<dbReference type="InterPro" id="IPR052741">
    <property type="entry name" value="Mitochondrial_HTD2"/>
</dbReference>
<dbReference type="PANTHER" id="PTHR28152">
    <property type="entry name" value="HYDROXYACYL-THIOESTER DEHYDRATASE TYPE 2, MITOCHONDRIAL"/>
    <property type="match status" value="1"/>
</dbReference>
<dbReference type="PANTHER" id="PTHR28152:SF1">
    <property type="entry name" value="HYDROXYACYL-THIOESTER DEHYDRATASE TYPE 2, MITOCHONDRIAL"/>
    <property type="match status" value="1"/>
</dbReference>
<dbReference type="SUPFAM" id="SSF54637">
    <property type="entry name" value="Thioesterase/thiol ester dehydrase-isomerase"/>
    <property type="match status" value="1"/>
</dbReference>
<reference key="1">
    <citation type="journal article" date="2002" name="Nature">
        <title>The genome sequence of Schizosaccharomyces pombe.</title>
        <authorList>
            <person name="Wood V."/>
            <person name="Gwilliam R."/>
            <person name="Rajandream M.A."/>
            <person name="Lyne M.H."/>
            <person name="Lyne R."/>
            <person name="Stewart A."/>
            <person name="Sgouros J.G."/>
            <person name="Peat N."/>
            <person name="Hayles J."/>
            <person name="Baker S.G."/>
            <person name="Basham D."/>
            <person name="Bowman S."/>
            <person name="Brooks K."/>
            <person name="Brown D."/>
            <person name="Brown S."/>
            <person name="Chillingworth T."/>
            <person name="Churcher C.M."/>
            <person name="Collins M."/>
            <person name="Connor R."/>
            <person name="Cronin A."/>
            <person name="Davis P."/>
            <person name="Feltwell T."/>
            <person name="Fraser A."/>
            <person name="Gentles S."/>
            <person name="Goble A."/>
            <person name="Hamlin N."/>
            <person name="Harris D.E."/>
            <person name="Hidalgo J."/>
            <person name="Hodgson G."/>
            <person name="Holroyd S."/>
            <person name="Hornsby T."/>
            <person name="Howarth S."/>
            <person name="Huckle E.J."/>
            <person name="Hunt S."/>
            <person name="Jagels K."/>
            <person name="James K.D."/>
            <person name="Jones L."/>
            <person name="Jones M."/>
            <person name="Leather S."/>
            <person name="McDonald S."/>
            <person name="McLean J."/>
            <person name="Mooney P."/>
            <person name="Moule S."/>
            <person name="Mungall K.L."/>
            <person name="Murphy L.D."/>
            <person name="Niblett D."/>
            <person name="Odell C."/>
            <person name="Oliver K."/>
            <person name="O'Neil S."/>
            <person name="Pearson D."/>
            <person name="Quail M.A."/>
            <person name="Rabbinowitsch E."/>
            <person name="Rutherford K.M."/>
            <person name="Rutter S."/>
            <person name="Saunders D."/>
            <person name="Seeger K."/>
            <person name="Sharp S."/>
            <person name="Skelton J."/>
            <person name="Simmonds M.N."/>
            <person name="Squares R."/>
            <person name="Squares S."/>
            <person name="Stevens K."/>
            <person name="Taylor K."/>
            <person name="Taylor R.G."/>
            <person name="Tivey A."/>
            <person name="Walsh S.V."/>
            <person name="Warren T."/>
            <person name="Whitehead S."/>
            <person name="Woodward J.R."/>
            <person name="Volckaert G."/>
            <person name="Aert R."/>
            <person name="Robben J."/>
            <person name="Grymonprez B."/>
            <person name="Weltjens I."/>
            <person name="Vanstreels E."/>
            <person name="Rieger M."/>
            <person name="Schaefer M."/>
            <person name="Mueller-Auer S."/>
            <person name="Gabel C."/>
            <person name="Fuchs M."/>
            <person name="Duesterhoeft A."/>
            <person name="Fritzc C."/>
            <person name="Holzer E."/>
            <person name="Moestl D."/>
            <person name="Hilbert H."/>
            <person name="Borzym K."/>
            <person name="Langer I."/>
            <person name="Beck A."/>
            <person name="Lehrach H."/>
            <person name="Reinhardt R."/>
            <person name="Pohl T.M."/>
            <person name="Eger P."/>
            <person name="Zimmermann W."/>
            <person name="Wedler H."/>
            <person name="Wambutt R."/>
            <person name="Purnelle B."/>
            <person name="Goffeau A."/>
            <person name="Cadieu E."/>
            <person name="Dreano S."/>
            <person name="Gloux S."/>
            <person name="Lelaure V."/>
            <person name="Mottier S."/>
            <person name="Galibert F."/>
            <person name="Aves S.J."/>
            <person name="Xiang Z."/>
            <person name="Hunt C."/>
            <person name="Moore K."/>
            <person name="Hurst S.M."/>
            <person name="Lucas M."/>
            <person name="Rochet M."/>
            <person name="Gaillardin C."/>
            <person name="Tallada V.A."/>
            <person name="Garzon A."/>
            <person name="Thode G."/>
            <person name="Daga R.R."/>
            <person name="Cruzado L."/>
            <person name="Jimenez J."/>
            <person name="Sanchez M."/>
            <person name="del Rey F."/>
            <person name="Benito J."/>
            <person name="Dominguez A."/>
            <person name="Revuelta J.L."/>
            <person name="Moreno S."/>
            <person name="Armstrong J."/>
            <person name="Forsburg S.L."/>
            <person name="Cerutti L."/>
            <person name="Lowe T."/>
            <person name="McCombie W.R."/>
            <person name="Paulsen I."/>
            <person name="Potashkin J."/>
            <person name="Shpakovski G.V."/>
            <person name="Ussery D."/>
            <person name="Barrell B.G."/>
            <person name="Nurse P."/>
        </authorList>
    </citation>
    <scope>NUCLEOTIDE SEQUENCE [LARGE SCALE GENOMIC DNA]</scope>
    <source>
        <strain>972 / ATCC 24843</strain>
    </source>
</reference>
<keyword id="KW-0456">Lyase</keyword>
<keyword id="KW-0496">Mitochondrion</keyword>
<keyword id="KW-0520">NAD</keyword>
<keyword id="KW-0560">Oxidoreductase</keyword>
<keyword id="KW-1185">Reference proteome</keyword>
<evidence type="ECO:0000250" key="1"/>
<evidence type="ECO:0000305" key="2"/>
<gene>
    <name type="primary">htd2</name>
    <name type="ORF">SPBC1105.15c</name>
</gene>
<organism>
    <name type="scientific">Schizosaccharomyces pombe (strain 972 / ATCC 24843)</name>
    <name type="common">Fission yeast</name>
    <dbReference type="NCBI Taxonomy" id="284812"/>
    <lineage>
        <taxon>Eukaryota</taxon>
        <taxon>Fungi</taxon>
        <taxon>Dikarya</taxon>
        <taxon>Ascomycota</taxon>
        <taxon>Taphrinomycotina</taxon>
        <taxon>Schizosaccharomycetes</taxon>
        <taxon>Schizosaccharomycetales</taxon>
        <taxon>Schizosaccharomycetaceae</taxon>
        <taxon>Schizosaccharomyces</taxon>
    </lineage>
</organism>
<accession>Q9Y814</accession>
<sequence length="300" mass="34675">MSAKVVLKDFLSQAPIDKLKATLSGHLPVSCITMDAKITSLQPGYHFLFFSLASPESNLNSDGYESLYSPKPNNPFSFKRRIWLHGVLRFHRPLHLFQTSECHELIQEESVKSPSITKEVEACLPKSSFLTKPTSEKQTKHVYIRRKIYDSQHQLCIEEDRTLAYLNRQELAIPKTLRSKSIPQHSWVFTPTPIMVFRYSALMFNAHMIHWNATYATKSENYPNLVLPGPLLVTSMLEYFRSVYPQMSKNMKRFEFRLLSPAFVNQPLRICISETGNLWIDRFTTDLDPPSLIARGRVYT</sequence>
<comment type="function">
    <text evidence="1">Mitochondrial 3-hydroxyacyl-thioester dehydratase involved in fatty acid biosynthesis. Required for respiratory growth and for normal mitochondrial morphology (By similarity).</text>
</comment>
<comment type="subcellular location">
    <subcellularLocation>
        <location evidence="1">Mitochondrion</location>
    </subcellularLocation>
</comment>
<comment type="similarity">
    <text evidence="2">Belongs to the HTD2 family.</text>
</comment>
<feature type="chain" id="PRO_0000351436" description="Hydroxyacyl-thioester dehydratase type 2, mitochondrial">
    <location>
        <begin position="1"/>
        <end position="300"/>
    </location>
</feature>
<protein>
    <recommendedName>
        <fullName>Hydroxyacyl-thioester dehydratase type 2, mitochondrial</fullName>
        <ecNumber>4.2.1.-</ecNumber>
    </recommendedName>
    <alternativeName>
        <fullName>3-hydroxyacyl-[acyl-carrier-protein] dehydratase</fullName>
    </alternativeName>
</protein>
<proteinExistence type="inferred from homology"/>